<gene>
    <name evidence="1" type="primary">cca</name>
    <name type="ordered locus">Spea_0971</name>
</gene>
<dbReference type="EC" id="2.7.7.72" evidence="1"/>
<dbReference type="EC" id="3.1.3.-" evidence="1"/>
<dbReference type="EC" id="3.1.4.-" evidence="1"/>
<dbReference type="EMBL" id="CP000851">
    <property type="protein sequence ID" value="ABV86298.1"/>
    <property type="molecule type" value="Genomic_DNA"/>
</dbReference>
<dbReference type="RefSeq" id="WP_012154231.1">
    <property type="nucleotide sequence ID" value="NC_009901.1"/>
</dbReference>
<dbReference type="SMR" id="A8H161"/>
<dbReference type="STRING" id="398579.Spea_0971"/>
<dbReference type="KEGG" id="spl:Spea_0971"/>
<dbReference type="eggNOG" id="COG0617">
    <property type="taxonomic scope" value="Bacteria"/>
</dbReference>
<dbReference type="HOGENOM" id="CLU_015961_1_1_6"/>
<dbReference type="OrthoDB" id="9805698at2"/>
<dbReference type="Proteomes" id="UP000002608">
    <property type="component" value="Chromosome"/>
</dbReference>
<dbReference type="GO" id="GO:0005524">
    <property type="term" value="F:ATP binding"/>
    <property type="evidence" value="ECO:0007669"/>
    <property type="project" value="UniProtKB-UniRule"/>
</dbReference>
<dbReference type="GO" id="GO:0004810">
    <property type="term" value="F:CCA tRNA nucleotidyltransferase activity"/>
    <property type="evidence" value="ECO:0007669"/>
    <property type="project" value="UniProtKB-UniRule"/>
</dbReference>
<dbReference type="GO" id="GO:0004112">
    <property type="term" value="F:cyclic-nucleotide phosphodiesterase activity"/>
    <property type="evidence" value="ECO:0007669"/>
    <property type="project" value="UniProtKB-UniRule"/>
</dbReference>
<dbReference type="GO" id="GO:0000287">
    <property type="term" value="F:magnesium ion binding"/>
    <property type="evidence" value="ECO:0007669"/>
    <property type="project" value="UniProtKB-UniRule"/>
</dbReference>
<dbReference type="GO" id="GO:0016791">
    <property type="term" value="F:phosphatase activity"/>
    <property type="evidence" value="ECO:0007669"/>
    <property type="project" value="UniProtKB-UniRule"/>
</dbReference>
<dbReference type="GO" id="GO:0000049">
    <property type="term" value="F:tRNA binding"/>
    <property type="evidence" value="ECO:0007669"/>
    <property type="project" value="UniProtKB-UniRule"/>
</dbReference>
<dbReference type="GO" id="GO:0042245">
    <property type="term" value="P:RNA repair"/>
    <property type="evidence" value="ECO:0007669"/>
    <property type="project" value="UniProtKB-KW"/>
</dbReference>
<dbReference type="GO" id="GO:0001680">
    <property type="term" value="P:tRNA 3'-terminal CCA addition"/>
    <property type="evidence" value="ECO:0007669"/>
    <property type="project" value="UniProtKB-UniRule"/>
</dbReference>
<dbReference type="CDD" id="cd00077">
    <property type="entry name" value="HDc"/>
    <property type="match status" value="1"/>
</dbReference>
<dbReference type="CDD" id="cd05398">
    <property type="entry name" value="NT_ClassII-CCAase"/>
    <property type="match status" value="1"/>
</dbReference>
<dbReference type="FunFam" id="1.10.3090.10:FF:000001">
    <property type="entry name" value="Multifunctional CCA protein"/>
    <property type="match status" value="1"/>
</dbReference>
<dbReference type="Gene3D" id="3.30.460.10">
    <property type="entry name" value="Beta Polymerase, domain 2"/>
    <property type="match status" value="1"/>
</dbReference>
<dbReference type="Gene3D" id="1.10.3090.10">
    <property type="entry name" value="cca-adding enzyme, domain 2"/>
    <property type="match status" value="1"/>
</dbReference>
<dbReference type="HAMAP" id="MF_01261">
    <property type="entry name" value="CCA_bact_type1"/>
    <property type="match status" value="1"/>
</dbReference>
<dbReference type="HAMAP" id="MF_01262">
    <property type="entry name" value="CCA_bact_type2"/>
    <property type="match status" value="1"/>
</dbReference>
<dbReference type="InterPro" id="IPR012006">
    <property type="entry name" value="CCA_bact"/>
</dbReference>
<dbReference type="InterPro" id="IPR003607">
    <property type="entry name" value="HD/PDEase_dom"/>
</dbReference>
<dbReference type="InterPro" id="IPR006674">
    <property type="entry name" value="HD_domain"/>
</dbReference>
<dbReference type="InterPro" id="IPR043519">
    <property type="entry name" value="NT_sf"/>
</dbReference>
<dbReference type="InterPro" id="IPR002646">
    <property type="entry name" value="PolA_pol_head_dom"/>
</dbReference>
<dbReference type="InterPro" id="IPR032828">
    <property type="entry name" value="PolyA_RNA-bd"/>
</dbReference>
<dbReference type="InterPro" id="IPR050124">
    <property type="entry name" value="tRNA_CCA-adding_enzyme"/>
</dbReference>
<dbReference type="NCBIfam" id="NF008137">
    <property type="entry name" value="PRK10885.1"/>
    <property type="match status" value="1"/>
</dbReference>
<dbReference type="PANTHER" id="PTHR47545">
    <property type="entry name" value="MULTIFUNCTIONAL CCA PROTEIN"/>
    <property type="match status" value="1"/>
</dbReference>
<dbReference type="PANTHER" id="PTHR47545:SF1">
    <property type="entry name" value="MULTIFUNCTIONAL CCA PROTEIN"/>
    <property type="match status" value="1"/>
</dbReference>
<dbReference type="Pfam" id="PF01966">
    <property type="entry name" value="HD"/>
    <property type="match status" value="1"/>
</dbReference>
<dbReference type="Pfam" id="PF01743">
    <property type="entry name" value="PolyA_pol"/>
    <property type="match status" value="1"/>
</dbReference>
<dbReference type="Pfam" id="PF12627">
    <property type="entry name" value="PolyA_pol_RNAbd"/>
    <property type="match status" value="1"/>
</dbReference>
<dbReference type="PIRSF" id="PIRSF000813">
    <property type="entry name" value="CCA_bact"/>
    <property type="match status" value="1"/>
</dbReference>
<dbReference type="SUPFAM" id="SSF81301">
    <property type="entry name" value="Nucleotidyltransferase"/>
    <property type="match status" value="1"/>
</dbReference>
<dbReference type="SUPFAM" id="SSF81891">
    <property type="entry name" value="Poly A polymerase C-terminal region-like"/>
    <property type="match status" value="1"/>
</dbReference>
<dbReference type="PROSITE" id="PS51831">
    <property type="entry name" value="HD"/>
    <property type="match status" value="1"/>
</dbReference>
<protein>
    <recommendedName>
        <fullName evidence="1">Multifunctional CCA protein</fullName>
    </recommendedName>
    <domain>
        <recommendedName>
            <fullName evidence="1">CCA-adding enzyme</fullName>
            <ecNumber evidence="1">2.7.7.72</ecNumber>
        </recommendedName>
        <alternativeName>
            <fullName evidence="1">CCA tRNA nucleotidyltransferase</fullName>
        </alternativeName>
        <alternativeName>
            <fullName evidence="1">tRNA CCA-pyrophosphorylase</fullName>
        </alternativeName>
        <alternativeName>
            <fullName evidence="1">tRNA adenylyl-/cytidylyl-transferase</fullName>
        </alternativeName>
        <alternativeName>
            <fullName evidence="1">tRNA nucleotidyltransferase</fullName>
        </alternativeName>
        <alternativeName>
            <fullName evidence="1">tRNA-NT</fullName>
        </alternativeName>
    </domain>
    <domain>
        <recommendedName>
            <fullName evidence="1">2'-nucleotidase</fullName>
            <ecNumber evidence="1">3.1.3.-</ecNumber>
        </recommendedName>
    </domain>
    <domain>
        <recommendedName>
            <fullName evidence="1">2',3'-cyclic phosphodiesterase</fullName>
            <ecNumber evidence="1">3.1.4.-</ecNumber>
        </recommendedName>
    </domain>
    <domain>
        <recommendedName>
            <fullName evidence="1">Phosphatase</fullName>
            <ecNumber evidence="1">3.1.3.-</ecNumber>
        </recommendedName>
    </domain>
</protein>
<comment type="function">
    <text evidence="1">Catalyzes the addition and repair of the essential 3'-terminal CCA sequence in tRNAs without using a nucleic acid template. Adds these three nucleotides in the order of C, C, and A to the tRNA nucleotide-73, using CTP and ATP as substrates and producing inorganic pyrophosphate. tRNA 3'-terminal CCA addition is required both for tRNA processing and repair. Also involved in tRNA surveillance by mediating tandem CCA addition to generate a CCACCA at the 3' terminus of unstable tRNAs. While stable tRNAs receive only 3'-terminal CCA, unstable tRNAs are marked with CCACCA and rapidly degraded.</text>
</comment>
<comment type="catalytic activity">
    <reaction evidence="1">
        <text>a tRNA precursor + 2 CTP + ATP = a tRNA with a 3' CCA end + 3 diphosphate</text>
        <dbReference type="Rhea" id="RHEA:14433"/>
        <dbReference type="Rhea" id="RHEA-COMP:10465"/>
        <dbReference type="Rhea" id="RHEA-COMP:10468"/>
        <dbReference type="ChEBI" id="CHEBI:30616"/>
        <dbReference type="ChEBI" id="CHEBI:33019"/>
        <dbReference type="ChEBI" id="CHEBI:37563"/>
        <dbReference type="ChEBI" id="CHEBI:74896"/>
        <dbReference type="ChEBI" id="CHEBI:83071"/>
        <dbReference type="EC" id="2.7.7.72"/>
    </reaction>
</comment>
<comment type="catalytic activity">
    <reaction evidence="1">
        <text>a tRNA with a 3' CCA end + 2 CTP + ATP = a tRNA with a 3' CCACCA end + 3 diphosphate</text>
        <dbReference type="Rhea" id="RHEA:76235"/>
        <dbReference type="Rhea" id="RHEA-COMP:10468"/>
        <dbReference type="Rhea" id="RHEA-COMP:18655"/>
        <dbReference type="ChEBI" id="CHEBI:30616"/>
        <dbReference type="ChEBI" id="CHEBI:33019"/>
        <dbReference type="ChEBI" id="CHEBI:37563"/>
        <dbReference type="ChEBI" id="CHEBI:83071"/>
        <dbReference type="ChEBI" id="CHEBI:195187"/>
    </reaction>
    <physiologicalReaction direction="left-to-right" evidence="1">
        <dbReference type="Rhea" id="RHEA:76236"/>
    </physiologicalReaction>
</comment>
<comment type="cofactor">
    <cofactor evidence="1">
        <name>Mg(2+)</name>
        <dbReference type="ChEBI" id="CHEBI:18420"/>
    </cofactor>
    <text evidence="1">Magnesium is required for nucleotidyltransferase activity.</text>
</comment>
<comment type="cofactor">
    <cofactor evidence="1">
        <name>Ni(2+)</name>
        <dbReference type="ChEBI" id="CHEBI:49786"/>
    </cofactor>
    <text evidence="1">Nickel for phosphatase activity.</text>
</comment>
<comment type="subunit">
    <text evidence="1">Monomer. Can also form homodimers and oligomers.</text>
</comment>
<comment type="domain">
    <text evidence="1">Comprises two domains: an N-terminal domain containing the nucleotidyltransferase activity and a C-terminal HD domain associated with both phosphodiesterase and phosphatase activities.</text>
</comment>
<comment type="miscellaneous">
    <text evidence="1">A single active site specifically recognizes both ATP and CTP and is responsible for their addition.</text>
</comment>
<comment type="similarity">
    <text evidence="1">Belongs to the tRNA nucleotidyltransferase/poly(A) polymerase family. Bacterial CCA-adding enzyme type 1 subfamily.</text>
</comment>
<feature type="chain" id="PRO_1000085816" description="Multifunctional CCA protein">
    <location>
        <begin position="1"/>
        <end position="412"/>
    </location>
</feature>
<feature type="domain" description="HD" evidence="1">
    <location>
        <begin position="228"/>
        <end position="329"/>
    </location>
</feature>
<feature type="binding site" evidence="1">
    <location>
        <position position="8"/>
    </location>
    <ligand>
        <name>ATP</name>
        <dbReference type="ChEBI" id="CHEBI:30616"/>
    </ligand>
</feature>
<feature type="binding site" evidence="1">
    <location>
        <position position="8"/>
    </location>
    <ligand>
        <name>CTP</name>
        <dbReference type="ChEBI" id="CHEBI:37563"/>
    </ligand>
</feature>
<feature type="binding site" evidence="1">
    <location>
        <position position="11"/>
    </location>
    <ligand>
        <name>ATP</name>
        <dbReference type="ChEBI" id="CHEBI:30616"/>
    </ligand>
</feature>
<feature type="binding site" evidence="1">
    <location>
        <position position="11"/>
    </location>
    <ligand>
        <name>CTP</name>
        <dbReference type="ChEBI" id="CHEBI:37563"/>
    </ligand>
</feature>
<feature type="binding site" evidence="1">
    <location>
        <position position="21"/>
    </location>
    <ligand>
        <name>Mg(2+)</name>
        <dbReference type="ChEBI" id="CHEBI:18420"/>
    </ligand>
</feature>
<feature type="binding site" evidence="1">
    <location>
        <position position="23"/>
    </location>
    <ligand>
        <name>Mg(2+)</name>
        <dbReference type="ChEBI" id="CHEBI:18420"/>
    </ligand>
</feature>
<feature type="binding site" evidence="1">
    <location>
        <position position="91"/>
    </location>
    <ligand>
        <name>ATP</name>
        <dbReference type="ChEBI" id="CHEBI:30616"/>
    </ligand>
</feature>
<feature type="binding site" evidence="1">
    <location>
        <position position="91"/>
    </location>
    <ligand>
        <name>CTP</name>
        <dbReference type="ChEBI" id="CHEBI:37563"/>
    </ligand>
</feature>
<feature type="binding site" evidence="1">
    <location>
        <position position="137"/>
    </location>
    <ligand>
        <name>ATP</name>
        <dbReference type="ChEBI" id="CHEBI:30616"/>
    </ligand>
</feature>
<feature type="binding site" evidence="1">
    <location>
        <position position="137"/>
    </location>
    <ligand>
        <name>CTP</name>
        <dbReference type="ChEBI" id="CHEBI:37563"/>
    </ligand>
</feature>
<feature type="binding site" evidence="1">
    <location>
        <position position="140"/>
    </location>
    <ligand>
        <name>ATP</name>
        <dbReference type="ChEBI" id="CHEBI:30616"/>
    </ligand>
</feature>
<feature type="binding site" evidence="1">
    <location>
        <position position="140"/>
    </location>
    <ligand>
        <name>CTP</name>
        <dbReference type="ChEBI" id="CHEBI:37563"/>
    </ligand>
</feature>
<reference key="1">
    <citation type="submission" date="2007-10" db="EMBL/GenBank/DDBJ databases">
        <title>Complete sequence of Shewanella pealeana ATCC 700345.</title>
        <authorList>
            <consortium name="US DOE Joint Genome Institute"/>
            <person name="Copeland A."/>
            <person name="Lucas S."/>
            <person name="Lapidus A."/>
            <person name="Barry K."/>
            <person name="Glavina del Rio T."/>
            <person name="Dalin E."/>
            <person name="Tice H."/>
            <person name="Pitluck S."/>
            <person name="Chertkov O."/>
            <person name="Brettin T."/>
            <person name="Bruce D."/>
            <person name="Detter J.C."/>
            <person name="Han C."/>
            <person name="Schmutz J."/>
            <person name="Larimer F."/>
            <person name="Land M."/>
            <person name="Hauser L."/>
            <person name="Kyrpides N."/>
            <person name="Kim E."/>
            <person name="Zhao J.-S.Z."/>
            <person name="Manno D."/>
            <person name="Hawari J."/>
            <person name="Richardson P."/>
        </authorList>
    </citation>
    <scope>NUCLEOTIDE SEQUENCE [LARGE SCALE GENOMIC DNA]</scope>
    <source>
        <strain>ATCC 700345 / ANG-SQ1</strain>
    </source>
</reference>
<proteinExistence type="inferred from homology"/>
<organism>
    <name type="scientific">Shewanella pealeana (strain ATCC 700345 / ANG-SQ1)</name>
    <dbReference type="NCBI Taxonomy" id="398579"/>
    <lineage>
        <taxon>Bacteria</taxon>
        <taxon>Pseudomonadati</taxon>
        <taxon>Pseudomonadota</taxon>
        <taxon>Gammaproteobacteria</taxon>
        <taxon>Alteromonadales</taxon>
        <taxon>Shewanellaceae</taxon>
        <taxon>Shewanella</taxon>
    </lineage>
</organism>
<name>CCA_SHEPA</name>
<sequence length="412" mass="45970">MKIYLVGGAVRDKLLKLPVKDHDYMVVGATPEQMLSLGYNQVGKDFPVFLHPKTGQEYALARTERKTAAGYGGFSVDAAPTVTLEQDLLRRDLTINAIAQDDAGNLYDPYNGIADLEKRILRHVSDAFVEDPLRVLRVARFAARFHGLKFTIAPETLSLMTTLSRSGELEALTAERVYLELDKALSTDNPQVFFQVLKECGALAVLFPEIEALFGVPQPENWHPEIDTGIHTMMVLEQAAKLSDDNSVRFAALVHDLGKALSPKEHLPKHHGHGQKGLPLIKSLCERFRVPNEYRDLALLVCDQHQNIHKITELRADTLVKLFDKADFWRKPQRLEQLLIACEADSKGRKGLEQTAYPQADYLKQCFAAASAVEVKSIIAQGYKGAEIRTQLNVKRIAEVQAVKGLQPIEAK</sequence>
<keyword id="KW-0067">ATP-binding</keyword>
<keyword id="KW-0378">Hydrolase</keyword>
<keyword id="KW-0460">Magnesium</keyword>
<keyword id="KW-0479">Metal-binding</keyword>
<keyword id="KW-0511">Multifunctional enzyme</keyword>
<keyword id="KW-0533">Nickel</keyword>
<keyword id="KW-0547">Nucleotide-binding</keyword>
<keyword id="KW-0548">Nucleotidyltransferase</keyword>
<keyword id="KW-1185">Reference proteome</keyword>
<keyword id="KW-0692">RNA repair</keyword>
<keyword id="KW-0694">RNA-binding</keyword>
<keyword id="KW-0808">Transferase</keyword>
<keyword id="KW-0819">tRNA processing</keyword>
<accession>A8H161</accession>
<evidence type="ECO:0000255" key="1">
    <source>
        <dbReference type="HAMAP-Rule" id="MF_01261"/>
    </source>
</evidence>